<dbReference type="EC" id="3.4.11.-" evidence="1"/>
<dbReference type="EMBL" id="FM200053">
    <property type="protein sequence ID" value="CAR58952.1"/>
    <property type="molecule type" value="Genomic_DNA"/>
</dbReference>
<dbReference type="RefSeq" id="WP_000598921.1">
    <property type="nucleotide sequence ID" value="NC_011147.1"/>
</dbReference>
<dbReference type="SMR" id="B5BG71"/>
<dbReference type="MEROPS" id="M90.001"/>
<dbReference type="KEGG" id="sek:SSPA0810"/>
<dbReference type="HOGENOM" id="CLU_063037_2_0_6"/>
<dbReference type="Proteomes" id="UP000001869">
    <property type="component" value="Chromosome"/>
</dbReference>
<dbReference type="GO" id="GO:0005829">
    <property type="term" value="C:cytosol"/>
    <property type="evidence" value="ECO:0007669"/>
    <property type="project" value="TreeGrafter"/>
</dbReference>
<dbReference type="GO" id="GO:0004177">
    <property type="term" value="F:aminopeptidase activity"/>
    <property type="evidence" value="ECO:0007669"/>
    <property type="project" value="UniProtKB-UniRule"/>
</dbReference>
<dbReference type="GO" id="GO:0008237">
    <property type="term" value="F:metallopeptidase activity"/>
    <property type="evidence" value="ECO:0007669"/>
    <property type="project" value="UniProtKB-UniRule"/>
</dbReference>
<dbReference type="GO" id="GO:0008270">
    <property type="term" value="F:zinc ion binding"/>
    <property type="evidence" value="ECO:0007669"/>
    <property type="project" value="UniProtKB-UniRule"/>
</dbReference>
<dbReference type="GO" id="GO:0006508">
    <property type="term" value="P:proteolysis"/>
    <property type="evidence" value="ECO:0007669"/>
    <property type="project" value="UniProtKB-KW"/>
</dbReference>
<dbReference type="CDD" id="cd20169">
    <property type="entry name" value="Peptidase_M90_mtfA"/>
    <property type="match status" value="1"/>
</dbReference>
<dbReference type="FunFam" id="1.10.472.150:FF:000001">
    <property type="entry name" value="Protein MtfA"/>
    <property type="match status" value="1"/>
</dbReference>
<dbReference type="FunFam" id="3.40.390.10:FF:000012">
    <property type="entry name" value="Protein MtfA"/>
    <property type="match status" value="1"/>
</dbReference>
<dbReference type="Gene3D" id="3.40.390.10">
    <property type="entry name" value="Collagenase (Catalytic Domain)"/>
    <property type="match status" value="1"/>
</dbReference>
<dbReference type="Gene3D" id="1.10.472.150">
    <property type="entry name" value="Glucose-regulated metallo-peptidase M90, N-terminal domain"/>
    <property type="match status" value="1"/>
</dbReference>
<dbReference type="HAMAP" id="MF_01593">
    <property type="entry name" value="MtfA"/>
    <property type="match status" value="1"/>
</dbReference>
<dbReference type="InterPro" id="IPR024079">
    <property type="entry name" value="MetalloPept_cat_dom_sf"/>
</dbReference>
<dbReference type="InterPro" id="IPR057256">
    <property type="entry name" value="MtfA_enterob"/>
</dbReference>
<dbReference type="InterPro" id="IPR010384">
    <property type="entry name" value="MtfA_fam"/>
</dbReference>
<dbReference type="InterPro" id="IPR042252">
    <property type="entry name" value="MtfA_N"/>
</dbReference>
<dbReference type="NCBIfam" id="NF011939">
    <property type="entry name" value="PRK15410.1"/>
    <property type="match status" value="1"/>
</dbReference>
<dbReference type="PANTHER" id="PTHR30164">
    <property type="entry name" value="MTFA PEPTIDASE"/>
    <property type="match status" value="1"/>
</dbReference>
<dbReference type="PANTHER" id="PTHR30164:SF2">
    <property type="entry name" value="PROTEIN MTFA"/>
    <property type="match status" value="1"/>
</dbReference>
<dbReference type="Pfam" id="PF06167">
    <property type="entry name" value="Peptidase_M90"/>
    <property type="match status" value="1"/>
</dbReference>
<dbReference type="SUPFAM" id="SSF55486">
    <property type="entry name" value="Metalloproteases ('zincins'), catalytic domain"/>
    <property type="match status" value="1"/>
</dbReference>
<protein>
    <recommendedName>
        <fullName evidence="1">Mlc titration factor A</fullName>
    </recommendedName>
    <alternativeName>
        <fullName evidence="1">Probable zinc metallopeptidase MtfA</fullName>
        <ecNumber evidence="1">3.4.11.-</ecNumber>
    </alternativeName>
</protein>
<name>MTFA_SALPK</name>
<accession>B5BG71</accession>
<proteinExistence type="inferred from homology"/>
<organism>
    <name type="scientific">Salmonella paratyphi A (strain AKU_12601)</name>
    <dbReference type="NCBI Taxonomy" id="554290"/>
    <lineage>
        <taxon>Bacteria</taxon>
        <taxon>Pseudomonadati</taxon>
        <taxon>Pseudomonadota</taxon>
        <taxon>Gammaproteobacteria</taxon>
        <taxon>Enterobacterales</taxon>
        <taxon>Enterobacteriaceae</taxon>
        <taxon>Salmonella</taxon>
    </lineage>
</organism>
<sequence length="265" mass="30236">MIKWPWKAQEITQNEDWPWDDALAIPLLVNLTAQEQARLIALAERFLQQKRLVALQGFELDSLKSARIALIFCLPILELGIEWLDGFHEVLIYPAPFVVDDEWEDDIGLVHSQRVVQSGQSWQQGPIILNWLDIQDSFDASGFNLIIHEVAHKLDMRNGDRASGIPFIPLRDVAGWEHDLHAAMNNIQDEIDLVGESAASIDAYAATDPAECFAVLSEYFFSAPELFAPRFPALWQRFCQFYRQDPSQRLRVSADEGDYGEESEH</sequence>
<gene>
    <name evidence="1" type="primary">mtfA</name>
    <name type="ordered locus">SSPA0810</name>
</gene>
<comment type="function">
    <text evidence="1">Involved in the modulation of the activity of the glucose-phosphotransferase system (glucose-PTS). Interacts with the transcriptional repressor Mlc, preventing its interaction with DNA and leading to the modulation of expression of genes regulated by Mlc, including ptsG, which encodes the PTS system glucose-specific EIICB component.</text>
</comment>
<comment type="function">
    <text evidence="1">Shows zinc-dependent metallopeptidase activity.</text>
</comment>
<comment type="cofactor">
    <cofactor evidence="1">
        <name>Zn(2+)</name>
        <dbReference type="ChEBI" id="CHEBI:29105"/>
    </cofactor>
    <text evidence="1">Binds 1 zinc ion per subunit.</text>
</comment>
<comment type="subunit">
    <text evidence="1">Interacts with Mlc.</text>
</comment>
<comment type="subcellular location">
    <subcellularLocation>
        <location evidence="1">Cytoplasm</location>
    </subcellularLocation>
</comment>
<comment type="similarity">
    <text evidence="1">Belongs to the MtfA family.</text>
</comment>
<keyword id="KW-0031">Aminopeptidase</keyword>
<keyword id="KW-0963">Cytoplasm</keyword>
<keyword id="KW-0378">Hydrolase</keyword>
<keyword id="KW-0479">Metal-binding</keyword>
<keyword id="KW-0482">Metalloprotease</keyword>
<keyword id="KW-0645">Protease</keyword>
<keyword id="KW-0862">Zinc</keyword>
<evidence type="ECO:0000255" key="1">
    <source>
        <dbReference type="HAMAP-Rule" id="MF_01593"/>
    </source>
</evidence>
<reference key="1">
    <citation type="journal article" date="2009" name="BMC Genomics">
        <title>Pseudogene accumulation in the evolutionary histories of Salmonella enterica serovars Paratyphi A and Typhi.</title>
        <authorList>
            <person name="Holt K.E."/>
            <person name="Thomson N.R."/>
            <person name="Wain J."/>
            <person name="Langridge G.C."/>
            <person name="Hasan R."/>
            <person name="Bhutta Z.A."/>
            <person name="Quail M.A."/>
            <person name="Norbertczak H."/>
            <person name="Walker D."/>
            <person name="Simmonds M."/>
            <person name="White B."/>
            <person name="Bason N."/>
            <person name="Mungall K."/>
            <person name="Dougan G."/>
            <person name="Parkhill J."/>
        </authorList>
    </citation>
    <scope>NUCLEOTIDE SEQUENCE [LARGE SCALE GENOMIC DNA]</scope>
    <source>
        <strain>AKU_12601</strain>
    </source>
</reference>
<feature type="chain" id="PRO_1000147847" description="Mlc titration factor A">
    <location>
        <begin position="1"/>
        <end position="265"/>
    </location>
</feature>
<feature type="binding site" evidence="1">
    <location>
        <position position="111"/>
    </location>
    <ligand>
        <name>Zn(2+)</name>
        <dbReference type="ChEBI" id="CHEBI:29105"/>
    </ligand>
</feature>
<feature type="binding site" evidence="1">
    <location>
        <position position="148"/>
    </location>
    <ligand>
        <name>Zn(2+)</name>
        <dbReference type="ChEBI" id="CHEBI:29105"/>
    </ligand>
</feature>
<feature type="binding site" evidence="1">
    <location>
        <position position="152"/>
    </location>
    <ligand>
        <name>Zn(2+)</name>
        <dbReference type="ChEBI" id="CHEBI:29105"/>
    </ligand>
</feature>
<feature type="binding site" evidence="1">
    <location>
        <position position="211"/>
    </location>
    <ligand>
        <name>Zn(2+)</name>
        <dbReference type="ChEBI" id="CHEBI:29105"/>
    </ligand>
</feature>